<reference evidence="5 6" key="1">
    <citation type="journal article" date="1999" name="Biosci. Biotechnol. Biochem.">
        <title>Cloning and expression of the N,N-dimethylformamidase gene from Alcaligenes sp. strain KUFA-1.</title>
        <authorList>
            <person name="Hasegawa Y."/>
            <person name="Tokuyama T."/>
            <person name="Iwaki H."/>
        </authorList>
    </citation>
    <scope>NUCLEOTIDE SEQUENCE [GENOMIC DNA]</scope>
    <scope>PROTEIN SEQUENCE OF 1-25</scope>
    <scope>FUNCTION</scope>
    <scope>CATALYTIC ACTIVITY</scope>
    <scope>BIOPHYSICOCHEMICAL PROPERTIES</scope>
    <scope>SUBUNIT</scope>
    <source>
        <strain evidence="6">KUFA-1</strain>
    </source>
</reference>
<reference evidence="5" key="2">
    <citation type="journal article" date="1999" name="J. Ferment. Bioeng.">
        <title>Purification and characterization of N,N-dimethylformamidase from Alcaligenes sp. KUFA-1.</title>
        <authorList>
            <person name="Hasegawa Y."/>
            <person name="Matsuo M."/>
            <person name="Sigemoto Y."/>
            <person name="Sakai T."/>
            <person name="Tokuyama T."/>
        </authorList>
    </citation>
    <scope>FUNCTION</scope>
    <scope>CATALYTIC ACTIVITY</scope>
    <scope>ACTIVITY REGULATION</scope>
    <scope>BIOPHYSICOCHEMICAL PROPERTIES</scope>
    <scope>SUBUNIT</scope>
</reference>
<protein>
    <recommendedName>
        <fullName evidence="3 6">N,N-dimethylformamidase beta subunit</fullName>
        <ecNumber>3.5.1.56</ecNumber>
    </recommendedName>
    <alternativeName>
        <fullName evidence="4">N,N-dimethylformamidase heavy chain</fullName>
    </alternativeName>
</protein>
<organism>
    <name type="scientific">Alcaligenes sp</name>
    <dbReference type="NCBI Taxonomy" id="512"/>
    <lineage>
        <taxon>Bacteria</taxon>
        <taxon>Pseudomonadati</taxon>
        <taxon>Pseudomonadota</taxon>
        <taxon>Betaproteobacteria</taxon>
        <taxon>Burkholderiales</taxon>
        <taxon>Alcaligenaceae</taxon>
        <taxon>Alcaligenes</taxon>
    </lineage>
</organism>
<dbReference type="EC" id="3.5.1.56"/>
<dbReference type="EMBL" id="AB028874">
    <property type="protein sequence ID" value="BAA90664.1"/>
    <property type="molecule type" value="Genomic_DNA"/>
</dbReference>
<dbReference type="PIR" id="JC7174">
    <property type="entry name" value="JC7174"/>
</dbReference>
<dbReference type="SMR" id="Q9LCC0"/>
<dbReference type="KEGG" id="ag:BAA90664"/>
<dbReference type="GO" id="GO:0050116">
    <property type="term" value="F:N,N-dimethylformamidase activity"/>
    <property type="evidence" value="ECO:0007669"/>
    <property type="project" value="UniProtKB-EC"/>
</dbReference>
<dbReference type="Gene3D" id="2.60.120.200">
    <property type="match status" value="1"/>
</dbReference>
<dbReference type="InterPro" id="IPR013320">
    <property type="entry name" value="ConA-like_dom_sf"/>
</dbReference>
<dbReference type="InterPro" id="IPR046540">
    <property type="entry name" value="DMFA2_C"/>
</dbReference>
<dbReference type="Pfam" id="PF20254">
    <property type="entry name" value="DMFA2_C"/>
    <property type="match status" value="1"/>
</dbReference>
<dbReference type="SUPFAM" id="SSF49899">
    <property type="entry name" value="Concanavalin A-like lectins/glucanases"/>
    <property type="match status" value="1"/>
</dbReference>
<keyword id="KW-0903">Direct protein sequencing</keyword>
<keyword id="KW-0378">Hydrolase</keyword>
<comment type="function">
    <text evidence="1 2">Hydrolyzes N,N-dimethylformamide, and to a lesser extent N,N-dimethylacetamide and N,N-diethylacetamide. Has no activity against the substituted amides N-methylformamide, N-ethylformamide, N-ethylformamide and N-methylacetamide or the unsubstituted amides formamide, nicotinamide, acetoamide, benzamide, acetamide and acrylamide.</text>
</comment>
<comment type="catalytic activity">
    <reaction evidence="1 2">
        <text>N,N-dimethylformamide + H2O = dimethylamine + formate</text>
        <dbReference type="Rhea" id="RHEA:19517"/>
        <dbReference type="ChEBI" id="CHEBI:15377"/>
        <dbReference type="ChEBI" id="CHEBI:15740"/>
        <dbReference type="ChEBI" id="CHEBI:17741"/>
        <dbReference type="ChEBI" id="CHEBI:58040"/>
        <dbReference type="EC" id="3.5.1.56"/>
    </reaction>
</comment>
<comment type="activity regulation">
    <text evidence="2">Activity is slightly inhibited by Mg(2+) and Mn(2+), and slightly increased by Cu(2+). Activity is slightly inhibited by the chelating agents 8-hydroxyquinoline, ethylenediaminetetraacetate, o-phenanthroline and 2,2'-bipyridyl.</text>
</comment>
<comment type="biophysicochemical properties">
    <kinetics>
        <KM evidence="1 2">1.28 mM for N,N-dimethylformamide</KM>
        <Vmax evidence="1 2">83.3 umol/min/mg enzyme with N,N-dimethylformamide as substrate</Vmax>
    </kinetics>
    <phDependence>
        <text evidence="1 2">Optimum pH is 6.0-7.0.</text>
    </phDependence>
    <temperatureDependence>
        <text evidence="1 2">Optimum temperature is 50-55 degrees Celsius. Stable up to 50 degrees Celsius, inactivated after incubation at 60 degrees Celsius for 30 minutes. Activity decreases below 50 degrees Celsius, with 20% of activity retained at 25 degrees Celsius.</text>
    </temperatureDependence>
</comment>
<comment type="subunit">
    <text evidence="1 2">Heterotetramer of two DmfA1 (alpha) and two DmfA2 (beta) subunits.</text>
</comment>
<comment type="caution">
    <text evidence="5">It is not known which subunit of DmfA1 or DmfA2 possesses catalytic activity.</text>
</comment>
<proteinExistence type="evidence at protein level"/>
<evidence type="ECO:0000269" key="1">
    <source>
    </source>
</evidence>
<evidence type="ECO:0000269" key="2">
    <source ref="2"/>
</evidence>
<evidence type="ECO:0000303" key="3">
    <source>
    </source>
</evidence>
<evidence type="ECO:0000303" key="4">
    <source ref="2"/>
</evidence>
<evidence type="ECO:0000305" key="5"/>
<evidence type="ECO:0000312" key="6">
    <source>
        <dbReference type="EMBL" id="BAA90664.1"/>
    </source>
</evidence>
<feature type="chain" id="PRO_0000403316" description="N,N-dimethylformamidase beta subunit">
    <location>
        <begin position="1"/>
        <end position="762"/>
    </location>
</feature>
<sequence length="762" mass="84700">MKDIAIRGYCDRPSVATGETIRFYVSANETRGTFDAELVRLIHGDSNPAGPGYKEEAIKSDLEGQYPARFQRTQFGSYVEVADPDAGLQPDGAFSVHLFLWSTTPSRGRQGIASRWNDERQSGWNLAIEDGRVVFTIGDGSGATSSVVSDRPLFQQIWYSITGVYDPEKKQLRLYQKSVVNRTNSRFGLVVPLDSDCAVSADATVKAADSETSLLIAGLGEAAAQDGRTWCIAHYNGKVDAPKIYGCALGQDDAEKLSRGEIVRPISRLAHWDFSAGIGLNGIPTDHVVDASGNGHHGRCMNQPDRGSTGWNWDGHEENFIHCPEQYGALWFHEDCLDDCRWEKDFEFTVPEGLKSDFYAVKIRYEDTEDYIPFFVLPPRGTATAPILVIASTLSYLAYANEQIMHKADIGQAVAGHTPVLNENDVELHKNLSYYGLSTYDGHIDGRGVQYTSWRRPIMNLRPKHRQGFGSIWELPADLHLIDWLNHNGFEYDVATEHDLNDQGAELLRRYKVVLTGSHPEYQTWANADAWEDYLADGGRGMYLAANGMYWIVEVHPEKPWVMEVRKELGVTAWEAPPGEYHYSTNGRRGGRFRGRARATQKIWGTGMSSFGFDHSGYFVQMPDSQDERVAWIMEGIDPEERIGDGGLVGGGAGGYELDRYDLALGTPPNTLLLASSVEHSVVYTVIPDDKAFPHPGMNGGEHPFVRADITYFSTANGGGMFATSSISWLGSLSWNDYDNNVSKMTKNVLNQFIKDEPAPRV</sequence>
<name>DMFAB_ALCSP</name>
<accession>Q9LCC0</accession>
<gene>
    <name evidence="6" type="primary">dmfA2</name>
</gene>